<name>COBS_BRUA2</name>
<protein>
    <recommendedName>
        <fullName evidence="1">Adenosylcobinamide-GDP ribazoletransferase</fullName>
        <ecNumber evidence="1">2.7.8.26</ecNumber>
    </recommendedName>
    <alternativeName>
        <fullName evidence="1">Cobalamin synthase</fullName>
    </alternativeName>
    <alternativeName>
        <fullName evidence="1">Cobalamin-5'-phosphate synthase</fullName>
    </alternativeName>
</protein>
<sequence length="260" mass="26404">MQRNGLIGDTIRSLGFLSRLPLPQGWFDNTDDSLPRNARAFPLAGGILGLLAGVALLIANAISLPPLAAALIAIGALAAMTGALHEDGLGDTADGFFGASTPDRRLDIMKDSRIGTFAALTLVIWTGVKASLLMAIIARAGAGYALLALIGTEAASRAGMLAFWHALPSARPGGLADSMGQPQWETVVCGCGLGLALLAIGFLPSGGMVALINALVLMTVVLFGFARLCMAKIGGQTGDTLGAAQQIGSLAALIGLVMAL</sequence>
<evidence type="ECO:0000255" key="1">
    <source>
        <dbReference type="HAMAP-Rule" id="MF_00719"/>
    </source>
</evidence>
<keyword id="KW-0997">Cell inner membrane</keyword>
<keyword id="KW-1003">Cell membrane</keyword>
<keyword id="KW-0169">Cobalamin biosynthesis</keyword>
<keyword id="KW-0460">Magnesium</keyword>
<keyword id="KW-0472">Membrane</keyword>
<keyword id="KW-1185">Reference proteome</keyword>
<keyword id="KW-0808">Transferase</keyword>
<keyword id="KW-0812">Transmembrane</keyword>
<keyword id="KW-1133">Transmembrane helix</keyword>
<comment type="function">
    <text evidence="1">Joins adenosylcobinamide-GDP and alpha-ribazole to generate adenosylcobalamin (Ado-cobalamin). Also synthesizes adenosylcobalamin 5'-phosphate from adenosylcobinamide-GDP and alpha-ribazole 5'-phosphate.</text>
</comment>
<comment type="catalytic activity">
    <reaction evidence="1">
        <text>alpha-ribazole + adenosylcob(III)inamide-GDP = adenosylcob(III)alamin + GMP + H(+)</text>
        <dbReference type="Rhea" id="RHEA:16049"/>
        <dbReference type="ChEBI" id="CHEBI:10329"/>
        <dbReference type="ChEBI" id="CHEBI:15378"/>
        <dbReference type="ChEBI" id="CHEBI:18408"/>
        <dbReference type="ChEBI" id="CHEBI:58115"/>
        <dbReference type="ChEBI" id="CHEBI:60487"/>
        <dbReference type="EC" id="2.7.8.26"/>
    </reaction>
</comment>
<comment type="catalytic activity">
    <reaction evidence="1">
        <text>alpha-ribazole 5'-phosphate + adenosylcob(III)inamide-GDP = adenosylcob(III)alamin 5'-phosphate + GMP + H(+)</text>
        <dbReference type="Rhea" id="RHEA:23560"/>
        <dbReference type="ChEBI" id="CHEBI:15378"/>
        <dbReference type="ChEBI" id="CHEBI:57918"/>
        <dbReference type="ChEBI" id="CHEBI:58115"/>
        <dbReference type="ChEBI" id="CHEBI:60487"/>
        <dbReference type="ChEBI" id="CHEBI:60493"/>
        <dbReference type="EC" id="2.7.8.26"/>
    </reaction>
</comment>
<comment type="cofactor">
    <cofactor evidence="1">
        <name>Mg(2+)</name>
        <dbReference type="ChEBI" id="CHEBI:18420"/>
    </cofactor>
</comment>
<comment type="pathway">
    <text evidence="1">Cofactor biosynthesis; adenosylcobalamin biosynthesis; adenosylcobalamin from cob(II)yrinate a,c-diamide: step 7/7.</text>
</comment>
<comment type="subcellular location">
    <subcellularLocation>
        <location evidence="1">Cell inner membrane</location>
        <topology evidence="1">Multi-pass membrane protein</topology>
    </subcellularLocation>
</comment>
<comment type="similarity">
    <text evidence="1">Belongs to the CobS family.</text>
</comment>
<accession>Q2YNK8</accession>
<organism>
    <name type="scientific">Brucella abortus (strain 2308)</name>
    <dbReference type="NCBI Taxonomy" id="359391"/>
    <lineage>
        <taxon>Bacteria</taxon>
        <taxon>Pseudomonadati</taxon>
        <taxon>Pseudomonadota</taxon>
        <taxon>Alphaproteobacteria</taxon>
        <taxon>Hyphomicrobiales</taxon>
        <taxon>Brucellaceae</taxon>
        <taxon>Brucella/Ochrobactrum group</taxon>
        <taxon>Brucella</taxon>
    </lineage>
</organism>
<gene>
    <name evidence="1" type="primary">cobS</name>
    <name type="ordered locus">BAB1_0885</name>
</gene>
<proteinExistence type="inferred from homology"/>
<dbReference type="EC" id="2.7.8.26" evidence="1"/>
<dbReference type="EMBL" id="AM040264">
    <property type="protein sequence ID" value="CAJ10841.1"/>
    <property type="molecule type" value="Genomic_DNA"/>
</dbReference>
<dbReference type="RefSeq" id="WP_002963996.1">
    <property type="nucleotide sequence ID" value="NZ_KN046823.1"/>
</dbReference>
<dbReference type="STRING" id="359391.BAB1_0885"/>
<dbReference type="KEGG" id="bmf:BAB1_0885"/>
<dbReference type="PATRIC" id="fig|359391.11.peg.3194"/>
<dbReference type="HOGENOM" id="CLU_057426_1_0_5"/>
<dbReference type="PhylomeDB" id="Q2YNK8"/>
<dbReference type="UniPathway" id="UPA00148">
    <property type="reaction ID" value="UER00238"/>
</dbReference>
<dbReference type="Proteomes" id="UP000002719">
    <property type="component" value="Chromosome I"/>
</dbReference>
<dbReference type="GO" id="GO:0005886">
    <property type="term" value="C:plasma membrane"/>
    <property type="evidence" value="ECO:0007669"/>
    <property type="project" value="UniProtKB-SubCell"/>
</dbReference>
<dbReference type="GO" id="GO:0051073">
    <property type="term" value="F:adenosylcobinamide-GDP ribazoletransferase activity"/>
    <property type="evidence" value="ECO:0007669"/>
    <property type="project" value="UniProtKB-UniRule"/>
</dbReference>
<dbReference type="GO" id="GO:0008818">
    <property type="term" value="F:cobalamin 5'-phosphate synthase activity"/>
    <property type="evidence" value="ECO:0007669"/>
    <property type="project" value="UniProtKB-UniRule"/>
</dbReference>
<dbReference type="GO" id="GO:0009236">
    <property type="term" value="P:cobalamin biosynthetic process"/>
    <property type="evidence" value="ECO:0007669"/>
    <property type="project" value="UniProtKB-UniRule"/>
</dbReference>
<dbReference type="HAMAP" id="MF_00719">
    <property type="entry name" value="CobS"/>
    <property type="match status" value="1"/>
</dbReference>
<dbReference type="InterPro" id="IPR003805">
    <property type="entry name" value="CobS"/>
</dbReference>
<dbReference type="NCBIfam" id="TIGR00317">
    <property type="entry name" value="cobS"/>
    <property type="match status" value="1"/>
</dbReference>
<dbReference type="NCBIfam" id="NF001276">
    <property type="entry name" value="PRK00235.1-2"/>
    <property type="match status" value="1"/>
</dbReference>
<dbReference type="PANTHER" id="PTHR34148">
    <property type="entry name" value="ADENOSYLCOBINAMIDE-GDP RIBAZOLETRANSFERASE"/>
    <property type="match status" value="1"/>
</dbReference>
<dbReference type="PANTHER" id="PTHR34148:SF1">
    <property type="entry name" value="ADENOSYLCOBINAMIDE-GDP RIBAZOLETRANSFERASE"/>
    <property type="match status" value="1"/>
</dbReference>
<dbReference type="Pfam" id="PF02654">
    <property type="entry name" value="CobS"/>
    <property type="match status" value="1"/>
</dbReference>
<feature type="chain" id="PRO_1000045759" description="Adenosylcobinamide-GDP ribazoletransferase">
    <location>
        <begin position="1"/>
        <end position="260"/>
    </location>
</feature>
<feature type="transmembrane region" description="Helical" evidence="1">
    <location>
        <begin position="42"/>
        <end position="62"/>
    </location>
</feature>
<feature type="transmembrane region" description="Helical" evidence="1">
    <location>
        <begin position="64"/>
        <end position="84"/>
    </location>
</feature>
<feature type="transmembrane region" description="Helical" evidence="1">
    <location>
        <begin position="117"/>
        <end position="137"/>
    </location>
</feature>
<feature type="transmembrane region" description="Helical" evidence="1">
    <location>
        <begin position="144"/>
        <end position="164"/>
    </location>
</feature>
<feature type="transmembrane region" description="Helical" evidence="1">
    <location>
        <begin position="192"/>
        <end position="212"/>
    </location>
</feature>
<feature type="transmembrane region" description="Helical" evidence="1">
    <location>
        <begin position="214"/>
        <end position="234"/>
    </location>
</feature>
<feature type="transmembrane region" description="Helical" evidence="1">
    <location>
        <begin position="240"/>
        <end position="260"/>
    </location>
</feature>
<reference key="1">
    <citation type="journal article" date="2005" name="Infect. Immun.">
        <title>Whole-genome analyses of speciation events in pathogenic Brucellae.</title>
        <authorList>
            <person name="Chain P.S."/>
            <person name="Comerci D.J."/>
            <person name="Tolmasky M.E."/>
            <person name="Larimer F.W."/>
            <person name="Malfatti S.A."/>
            <person name="Vergez L.M."/>
            <person name="Aguero F."/>
            <person name="Land M.L."/>
            <person name="Ugalde R.A."/>
            <person name="Garcia E."/>
        </authorList>
    </citation>
    <scope>NUCLEOTIDE SEQUENCE [LARGE SCALE GENOMIC DNA]</scope>
    <source>
        <strain>2308</strain>
    </source>
</reference>